<proteinExistence type="inferred from homology"/>
<protein>
    <recommendedName>
        <fullName evidence="1">3-isopropylmalate dehydratase large subunit</fullName>
        <ecNumber evidence="1">4.2.1.33</ecNumber>
    </recommendedName>
    <alternativeName>
        <fullName evidence="1">Alpha-IPM isomerase</fullName>
        <shortName evidence="1">IPMI</shortName>
    </alternativeName>
    <alternativeName>
        <fullName evidence="1">Isopropylmalate isomerase</fullName>
    </alternativeName>
</protein>
<evidence type="ECO:0000255" key="1">
    <source>
        <dbReference type="HAMAP-Rule" id="MF_01026"/>
    </source>
</evidence>
<reference key="1">
    <citation type="journal article" date="2008" name="Chem. Biol. Interact.">
        <title>Extending the Bacillus cereus group genomics to putative food-borne pathogens of different toxicity.</title>
        <authorList>
            <person name="Lapidus A."/>
            <person name="Goltsman E."/>
            <person name="Auger S."/>
            <person name="Galleron N."/>
            <person name="Segurens B."/>
            <person name="Dossat C."/>
            <person name="Land M.L."/>
            <person name="Broussolle V."/>
            <person name="Brillard J."/>
            <person name="Guinebretiere M.-H."/>
            <person name="Sanchis V."/>
            <person name="Nguen-the C."/>
            <person name="Lereclus D."/>
            <person name="Richardson P."/>
            <person name="Wincker P."/>
            <person name="Weissenbach J."/>
            <person name="Ehrlich S.D."/>
            <person name="Sorokin A."/>
        </authorList>
    </citation>
    <scope>NUCLEOTIDE SEQUENCE [LARGE SCALE GENOMIC DNA]</scope>
    <source>
        <strain>DSM 22905 / CIP 110041 / 391-98 / NVH 391-98</strain>
    </source>
</reference>
<keyword id="KW-0004">4Fe-4S</keyword>
<keyword id="KW-0028">Amino-acid biosynthesis</keyword>
<keyword id="KW-0100">Branched-chain amino acid biosynthesis</keyword>
<keyword id="KW-0408">Iron</keyword>
<keyword id="KW-0411">Iron-sulfur</keyword>
<keyword id="KW-0432">Leucine biosynthesis</keyword>
<keyword id="KW-0456">Lyase</keyword>
<keyword id="KW-0479">Metal-binding</keyword>
<organism>
    <name type="scientific">Bacillus cytotoxicus (strain DSM 22905 / CIP 110041 / 391-98 / NVH 391-98)</name>
    <dbReference type="NCBI Taxonomy" id="315749"/>
    <lineage>
        <taxon>Bacteria</taxon>
        <taxon>Bacillati</taxon>
        <taxon>Bacillota</taxon>
        <taxon>Bacilli</taxon>
        <taxon>Bacillales</taxon>
        <taxon>Bacillaceae</taxon>
        <taxon>Bacillus</taxon>
        <taxon>Bacillus cereus group</taxon>
    </lineage>
</organism>
<feature type="chain" id="PRO_1000084208" description="3-isopropylmalate dehydratase large subunit">
    <location>
        <begin position="1"/>
        <end position="464"/>
    </location>
</feature>
<feature type="binding site" evidence="1">
    <location>
        <position position="337"/>
    </location>
    <ligand>
        <name>[4Fe-4S] cluster</name>
        <dbReference type="ChEBI" id="CHEBI:49883"/>
    </ligand>
</feature>
<feature type="binding site" evidence="1">
    <location>
        <position position="397"/>
    </location>
    <ligand>
        <name>[4Fe-4S] cluster</name>
        <dbReference type="ChEBI" id="CHEBI:49883"/>
    </ligand>
</feature>
<feature type="binding site" evidence="1">
    <location>
        <position position="400"/>
    </location>
    <ligand>
        <name>[4Fe-4S] cluster</name>
        <dbReference type="ChEBI" id="CHEBI:49883"/>
    </ligand>
</feature>
<name>LEUC_BACCN</name>
<gene>
    <name evidence="1" type="primary">leuC</name>
    <name type="ordered locus">Bcer98_1125</name>
</gene>
<dbReference type="EC" id="4.2.1.33" evidence="1"/>
<dbReference type="EMBL" id="CP000764">
    <property type="protein sequence ID" value="ABS21451.1"/>
    <property type="molecule type" value="Genomic_DNA"/>
</dbReference>
<dbReference type="RefSeq" id="WP_011984204.1">
    <property type="nucleotide sequence ID" value="NC_009674.1"/>
</dbReference>
<dbReference type="SMR" id="A7GMU3"/>
<dbReference type="STRING" id="315749.Bcer98_1125"/>
<dbReference type="GeneID" id="33896481"/>
<dbReference type="KEGG" id="bcy:Bcer98_1125"/>
<dbReference type="eggNOG" id="COG0065">
    <property type="taxonomic scope" value="Bacteria"/>
</dbReference>
<dbReference type="HOGENOM" id="CLU_006714_3_4_9"/>
<dbReference type="OrthoDB" id="9802769at2"/>
<dbReference type="UniPathway" id="UPA00048">
    <property type="reaction ID" value="UER00071"/>
</dbReference>
<dbReference type="Proteomes" id="UP000002300">
    <property type="component" value="Chromosome"/>
</dbReference>
<dbReference type="GO" id="GO:0003861">
    <property type="term" value="F:3-isopropylmalate dehydratase activity"/>
    <property type="evidence" value="ECO:0007669"/>
    <property type="project" value="UniProtKB-UniRule"/>
</dbReference>
<dbReference type="GO" id="GO:0051539">
    <property type="term" value="F:4 iron, 4 sulfur cluster binding"/>
    <property type="evidence" value="ECO:0007669"/>
    <property type="project" value="UniProtKB-KW"/>
</dbReference>
<dbReference type="GO" id="GO:0046872">
    <property type="term" value="F:metal ion binding"/>
    <property type="evidence" value="ECO:0007669"/>
    <property type="project" value="UniProtKB-KW"/>
</dbReference>
<dbReference type="GO" id="GO:0009098">
    <property type="term" value="P:L-leucine biosynthetic process"/>
    <property type="evidence" value="ECO:0007669"/>
    <property type="project" value="UniProtKB-UniRule"/>
</dbReference>
<dbReference type="CDD" id="cd01583">
    <property type="entry name" value="IPMI"/>
    <property type="match status" value="1"/>
</dbReference>
<dbReference type="FunFam" id="3.30.499.10:FF:000007">
    <property type="entry name" value="3-isopropylmalate dehydratase large subunit"/>
    <property type="match status" value="1"/>
</dbReference>
<dbReference type="Gene3D" id="3.30.499.10">
    <property type="entry name" value="Aconitase, domain 3"/>
    <property type="match status" value="2"/>
</dbReference>
<dbReference type="HAMAP" id="MF_01026">
    <property type="entry name" value="LeuC_type1"/>
    <property type="match status" value="1"/>
</dbReference>
<dbReference type="InterPro" id="IPR004430">
    <property type="entry name" value="3-IsopropMal_deHydase_lsu"/>
</dbReference>
<dbReference type="InterPro" id="IPR015931">
    <property type="entry name" value="Acnase/IPM_dHydase_lsu_aba_1/3"/>
</dbReference>
<dbReference type="InterPro" id="IPR001030">
    <property type="entry name" value="Acoase/IPM_deHydtase_lsu_aba"/>
</dbReference>
<dbReference type="InterPro" id="IPR018136">
    <property type="entry name" value="Aconitase_4Fe-4S_BS"/>
</dbReference>
<dbReference type="InterPro" id="IPR036008">
    <property type="entry name" value="Aconitase_4Fe-4S_dom"/>
</dbReference>
<dbReference type="InterPro" id="IPR050067">
    <property type="entry name" value="IPM_dehydratase_rel_enz"/>
</dbReference>
<dbReference type="InterPro" id="IPR033941">
    <property type="entry name" value="IPMI_cat"/>
</dbReference>
<dbReference type="NCBIfam" id="TIGR00170">
    <property type="entry name" value="leuC"/>
    <property type="match status" value="1"/>
</dbReference>
<dbReference type="NCBIfam" id="NF004016">
    <property type="entry name" value="PRK05478.1"/>
    <property type="match status" value="1"/>
</dbReference>
<dbReference type="NCBIfam" id="NF009116">
    <property type="entry name" value="PRK12466.1"/>
    <property type="match status" value="1"/>
</dbReference>
<dbReference type="PANTHER" id="PTHR43822:SF9">
    <property type="entry name" value="3-ISOPROPYLMALATE DEHYDRATASE"/>
    <property type="match status" value="1"/>
</dbReference>
<dbReference type="PANTHER" id="PTHR43822">
    <property type="entry name" value="HOMOACONITASE, MITOCHONDRIAL-RELATED"/>
    <property type="match status" value="1"/>
</dbReference>
<dbReference type="Pfam" id="PF00330">
    <property type="entry name" value="Aconitase"/>
    <property type="match status" value="1"/>
</dbReference>
<dbReference type="PRINTS" id="PR00415">
    <property type="entry name" value="ACONITASE"/>
</dbReference>
<dbReference type="SUPFAM" id="SSF53732">
    <property type="entry name" value="Aconitase iron-sulfur domain"/>
    <property type="match status" value="1"/>
</dbReference>
<dbReference type="PROSITE" id="PS00450">
    <property type="entry name" value="ACONITASE_1"/>
    <property type="match status" value="1"/>
</dbReference>
<dbReference type="PROSITE" id="PS01244">
    <property type="entry name" value="ACONITASE_2"/>
    <property type="match status" value="1"/>
</dbReference>
<accession>A7GMU3</accession>
<sequence length="464" mass="51070">MGKRLLDKLWEKHIVATNENGLDLLYIDLHLVHEVTSPQAFEGLRLANRTVRRPDLTFATMDHNIPTKDVWNITDHIAKQQLDTLRANCKQFHISLADIGDEAQGIVHVIGPELGLTVPGKTIVCGDSHTATHGAFSALAFGIGTSEVEHVLATQTLWQRKPKAMGIELKGTLPKGVYAKDIILHILATYGVAVGTGYVMEFYGETIRSMEMEERMTLCNMAIEGGAKAGIIAPDEKTFAYVKGRKYAPKDFERAVEKWSELYTDSDAVYDMHISIDVSKLAPYVTWGTNPSMGIRIDEQLPAISDQNEERAFAYMGLKPKQSAYDIPIKHVFIGSCTNSRLSDLEIAAAIVKGKKVKDGVRALVVPGSQKVRQLAMEKGLHHIFEEAGFEWREPGCSMCLGMNPDQVPAGEHCASTSNRNFEGRQGKGARTHLVSPAMAAAAALYGHFVDVRKESYDGAISYS</sequence>
<comment type="function">
    <text evidence="1">Catalyzes the isomerization between 2-isopropylmalate and 3-isopropylmalate, via the formation of 2-isopropylmaleate.</text>
</comment>
<comment type="catalytic activity">
    <reaction evidence="1">
        <text>(2R,3S)-3-isopropylmalate = (2S)-2-isopropylmalate</text>
        <dbReference type="Rhea" id="RHEA:32287"/>
        <dbReference type="ChEBI" id="CHEBI:1178"/>
        <dbReference type="ChEBI" id="CHEBI:35121"/>
        <dbReference type="EC" id="4.2.1.33"/>
    </reaction>
</comment>
<comment type="cofactor">
    <cofactor evidence="1">
        <name>[4Fe-4S] cluster</name>
        <dbReference type="ChEBI" id="CHEBI:49883"/>
    </cofactor>
    <text evidence="1">Binds 1 [4Fe-4S] cluster per subunit.</text>
</comment>
<comment type="pathway">
    <text evidence="1">Amino-acid biosynthesis; L-leucine biosynthesis; L-leucine from 3-methyl-2-oxobutanoate: step 2/4.</text>
</comment>
<comment type="subunit">
    <text evidence="1">Heterodimer of LeuC and LeuD.</text>
</comment>
<comment type="similarity">
    <text evidence="1">Belongs to the aconitase/IPM isomerase family. LeuC type 1 subfamily.</text>
</comment>